<proteinExistence type="inferred from homology"/>
<gene>
    <name evidence="1" type="primary">mnmA</name>
    <name type="ordered locus">Dvul_2170</name>
</gene>
<sequence>MTIAVAMSGGTDSLFALVLLKEQGQQVCGLHARFIPPTGHDPVPDIRAMCDRLGVDLHVVDLTEAFEEHVVRPFMEDYMVGRTPNPCARCNATMKFGLLADAAAHVGAVHLATGHYARLLRHPRWGTVLQRGVDPAKDQSYFLSLVPHARLEKAVFPLGNWRKEAVRGELARRSIVPPLPSESQEICFVPDDDYRAFLKNRRVRLPGPGPIVTTRGRKIGSHAGLWQYTEGQRKGLGIAWHEPLYVVGKDMENNMLLVGGREALASPGCVAEEVNLLVPYEDWPAEVAVRIRYRQQPLSARVTLRDGRLYARFREPQPPAARGQVLAVYDMEHHVLGGGVILGPLP</sequence>
<evidence type="ECO:0000255" key="1">
    <source>
        <dbReference type="HAMAP-Rule" id="MF_00144"/>
    </source>
</evidence>
<organism>
    <name type="scientific">Nitratidesulfovibrio vulgaris (strain DP4)</name>
    <name type="common">Desulfovibrio vulgaris</name>
    <dbReference type="NCBI Taxonomy" id="391774"/>
    <lineage>
        <taxon>Bacteria</taxon>
        <taxon>Pseudomonadati</taxon>
        <taxon>Thermodesulfobacteriota</taxon>
        <taxon>Desulfovibrionia</taxon>
        <taxon>Desulfovibrionales</taxon>
        <taxon>Desulfovibrionaceae</taxon>
        <taxon>Nitratidesulfovibrio</taxon>
    </lineage>
</organism>
<accession>A1VFH0</accession>
<dbReference type="EC" id="2.8.1.13" evidence="1"/>
<dbReference type="EMBL" id="CP000527">
    <property type="protein sequence ID" value="ABM29186.1"/>
    <property type="molecule type" value="Genomic_DNA"/>
</dbReference>
<dbReference type="RefSeq" id="WP_011792699.1">
    <property type="nucleotide sequence ID" value="NC_008751.1"/>
</dbReference>
<dbReference type="SMR" id="A1VFH0"/>
<dbReference type="KEGG" id="dvl:Dvul_2170"/>
<dbReference type="HOGENOM" id="CLU_035188_0_0_7"/>
<dbReference type="Proteomes" id="UP000009173">
    <property type="component" value="Chromosome"/>
</dbReference>
<dbReference type="GO" id="GO:0005737">
    <property type="term" value="C:cytoplasm"/>
    <property type="evidence" value="ECO:0007669"/>
    <property type="project" value="UniProtKB-SubCell"/>
</dbReference>
<dbReference type="GO" id="GO:0005524">
    <property type="term" value="F:ATP binding"/>
    <property type="evidence" value="ECO:0007669"/>
    <property type="project" value="UniProtKB-KW"/>
</dbReference>
<dbReference type="GO" id="GO:0000049">
    <property type="term" value="F:tRNA binding"/>
    <property type="evidence" value="ECO:0007669"/>
    <property type="project" value="UniProtKB-KW"/>
</dbReference>
<dbReference type="GO" id="GO:0103016">
    <property type="term" value="F:tRNA-uridine 2-sulfurtransferase activity"/>
    <property type="evidence" value="ECO:0007669"/>
    <property type="project" value="UniProtKB-EC"/>
</dbReference>
<dbReference type="GO" id="GO:0002143">
    <property type="term" value="P:tRNA wobble position uridine thiolation"/>
    <property type="evidence" value="ECO:0007669"/>
    <property type="project" value="TreeGrafter"/>
</dbReference>
<dbReference type="CDD" id="cd01998">
    <property type="entry name" value="MnmA_TRMU-like"/>
    <property type="match status" value="1"/>
</dbReference>
<dbReference type="FunFam" id="2.30.30.280:FF:000001">
    <property type="entry name" value="tRNA-specific 2-thiouridylase MnmA"/>
    <property type="match status" value="1"/>
</dbReference>
<dbReference type="Gene3D" id="2.30.30.280">
    <property type="entry name" value="Adenine nucleotide alpha hydrolases-like domains"/>
    <property type="match status" value="1"/>
</dbReference>
<dbReference type="Gene3D" id="3.40.50.620">
    <property type="entry name" value="HUPs"/>
    <property type="match status" value="1"/>
</dbReference>
<dbReference type="Gene3D" id="2.40.30.10">
    <property type="entry name" value="Translation factors"/>
    <property type="match status" value="1"/>
</dbReference>
<dbReference type="HAMAP" id="MF_00144">
    <property type="entry name" value="tRNA_thiouridyl_MnmA"/>
    <property type="match status" value="1"/>
</dbReference>
<dbReference type="InterPro" id="IPR004506">
    <property type="entry name" value="MnmA-like"/>
</dbReference>
<dbReference type="InterPro" id="IPR046885">
    <property type="entry name" value="MnmA-like_C"/>
</dbReference>
<dbReference type="InterPro" id="IPR046884">
    <property type="entry name" value="MnmA-like_central"/>
</dbReference>
<dbReference type="InterPro" id="IPR023382">
    <property type="entry name" value="MnmA-like_central_sf"/>
</dbReference>
<dbReference type="InterPro" id="IPR014729">
    <property type="entry name" value="Rossmann-like_a/b/a_fold"/>
</dbReference>
<dbReference type="NCBIfam" id="NF001138">
    <property type="entry name" value="PRK00143.1"/>
    <property type="match status" value="1"/>
</dbReference>
<dbReference type="NCBIfam" id="TIGR00420">
    <property type="entry name" value="trmU"/>
    <property type="match status" value="1"/>
</dbReference>
<dbReference type="PANTHER" id="PTHR11933:SF5">
    <property type="entry name" value="MITOCHONDRIAL TRNA-SPECIFIC 2-THIOURIDYLASE 1"/>
    <property type="match status" value="1"/>
</dbReference>
<dbReference type="PANTHER" id="PTHR11933">
    <property type="entry name" value="TRNA 5-METHYLAMINOMETHYL-2-THIOURIDYLATE -METHYLTRANSFERASE"/>
    <property type="match status" value="1"/>
</dbReference>
<dbReference type="Pfam" id="PF03054">
    <property type="entry name" value="tRNA_Me_trans"/>
    <property type="match status" value="1"/>
</dbReference>
<dbReference type="Pfam" id="PF20258">
    <property type="entry name" value="tRNA_Me_trans_C"/>
    <property type="match status" value="1"/>
</dbReference>
<dbReference type="Pfam" id="PF20259">
    <property type="entry name" value="tRNA_Me_trans_M"/>
    <property type="match status" value="1"/>
</dbReference>
<dbReference type="SUPFAM" id="SSF52402">
    <property type="entry name" value="Adenine nucleotide alpha hydrolases-like"/>
    <property type="match status" value="1"/>
</dbReference>
<reference key="1">
    <citation type="journal article" date="2009" name="Environ. Microbiol.">
        <title>Contribution of mobile genetic elements to Desulfovibrio vulgaris genome plasticity.</title>
        <authorList>
            <person name="Walker C.B."/>
            <person name="Stolyar S."/>
            <person name="Chivian D."/>
            <person name="Pinel N."/>
            <person name="Gabster J.A."/>
            <person name="Dehal P.S."/>
            <person name="He Z."/>
            <person name="Yang Z.K."/>
            <person name="Yen H.C."/>
            <person name="Zhou J."/>
            <person name="Wall J.D."/>
            <person name="Hazen T.C."/>
            <person name="Arkin A.P."/>
            <person name="Stahl D.A."/>
        </authorList>
    </citation>
    <scope>NUCLEOTIDE SEQUENCE [LARGE SCALE GENOMIC DNA]</scope>
    <source>
        <strain>DP4</strain>
    </source>
</reference>
<keyword id="KW-0067">ATP-binding</keyword>
<keyword id="KW-0963">Cytoplasm</keyword>
<keyword id="KW-1015">Disulfide bond</keyword>
<keyword id="KW-0547">Nucleotide-binding</keyword>
<keyword id="KW-0694">RNA-binding</keyword>
<keyword id="KW-0808">Transferase</keyword>
<keyword id="KW-0819">tRNA processing</keyword>
<keyword id="KW-0820">tRNA-binding</keyword>
<feature type="chain" id="PRO_0000349617" description="tRNA-specific 2-thiouridylase MnmA">
    <location>
        <begin position="1"/>
        <end position="346"/>
    </location>
</feature>
<feature type="region of interest" description="Interaction with tRNA" evidence="1">
    <location>
        <begin position="137"/>
        <end position="139"/>
    </location>
</feature>
<feature type="region of interest" description="Interaction with tRNA" evidence="1">
    <location>
        <begin position="292"/>
        <end position="293"/>
    </location>
</feature>
<feature type="active site" description="Nucleophile" evidence="1">
    <location>
        <position position="90"/>
    </location>
</feature>
<feature type="active site" description="Cysteine persulfide intermediate" evidence="1">
    <location>
        <position position="187"/>
    </location>
</feature>
<feature type="binding site" evidence="1">
    <location>
        <begin position="6"/>
        <end position="13"/>
    </location>
    <ligand>
        <name>ATP</name>
        <dbReference type="ChEBI" id="CHEBI:30616"/>
    </ligand>
</feature>
<feature type="binding site" evidence="1">
    <location>
        <position position="114"/>
    </location>
    <ligand>
        <name>ATP</name>
        <dbReference type="ChEBI" id="CHEBI:30616"/>
    </ligand>
</feature>
<feature type="site" description="Interaction with tRNA" evidence="1">
    <location>
        <position position="115"/>
    </location>
</feature>
<feature type="site" description="Interaction with tRNA" evidence="1">
    <location>
        <position position="324"/>
    </location>
</feature>
<feature type="disulfide bond" description="Alternate" evidence="1">
    <location>
        <begin position="90"/>
        <end position="187"/>
    </location>
</feature>
<protein>
    <recommendedName>
        <fullName evidence="1">tRNA-specific 2-thiouridylase MnmA</fullName>
        <ecNumber evidence="1">2.8.1.13</ecNumber>
    </recommendedName>
</protein>
<comment type="function">
    <text evidence="1">Catalyzes the 2-thiolation of uridine at the wobble position (U34) of tRNA, leading to the formation of s(2)U34.</text>
</comment>
<comment type="catalytic activity">
    <reaction evidence="1">
        <text>S-sulfanyl-L-cysteinyl-[protein] + uridine(34) in tRNA + AH2 + ATP = 2-thiouridine(34) in tRNA + L-cysteinyl-[protein] + A + AMP + diphosphate + H(+)</text>
        <dbReference type="Rhea" id="RHEA:47032"/>
        <dbReference type="Rhea" id="RHEA-COMP:10131"/>
        <dbReference type="Rhea" id="RHEA-COMP:11726"/>
        <dbReference type="Rhea" id="RHEA-COMP:11727"/>
        <dbReference type="Rhea" id="RHEA-COMP:11728"/>
        <dbReference type="ChEBI" id="CHEBI:13193"/>
        <dbReference type="ChEBI" id="CHEBI:15378"/>
        <dbReference type="ChEBI" id="CHEBI:17499"/>
        <dbReference type="ChEBI" id="CHEBI:29950"/>
        <dbReference type="ChEBI" id="CHEBI:30616"/>
        <dbReference type="ChEBI" id="CHEBI:33019"/>
        <dbReference type="ChEBI" id="CHEBI:61963"/>
        <dbReference type="ChEBI" id="CHEBI:65315"/>
        <dbReference type="ChEBI" id="CHEBI:87170"/>
        <dbReference type="ChEBI" id="CHEBI:456215"/>
        <dbReference type="EC" id="2.8.1.13"/>
    </reaction>
</comment>
<comment type="subcellular location">
    <subcellularLocation>
        <location evidence="1">Cytoplasm</location>
    </subcellularLocation>
</comment>
<comment type="similarity">
    <text evidence="1">Belongs to the MnmA/TRMU family.</text>
</comment>
<name>MNMA_NITV4</name>